<protein>
    <recommendedName>
        <fullName evidence="1">Esterase FrsA</fullName>
        <ecNumber evidence="1">3.1.1.1</ecNumber>
    </recommendedName>
</protein>
<organism>
    <name type="scientific">Salmonella enteritidis PT4 (strain P125109)</name>
    <dbReference type="NCBI Taxonomy" id="550537"/>
    <lineage>
        <taxon>Bacteria</taxon>
        <taxon>Pseudomonadati</taxon>
        <taxon>Pseudomonadota</taxon>
        <taxon>Gammaproteobacteria</taxon>
        <taxon>Enterobacterales</taxon>
        <taxon>Enterobacteriaceae</taxon>
        <taxon>Salmonella</taxon>
    </lineage>
</organism>
<comment type="function">
    <text evidence="1">Catalyzes the hydrolysis of esters.</text>
</comment>
<comment type="catalytic activity">
    <reaction evidence="1">
        <text>a carboxylic ester + H2O = an alcohol + a carboxylate + H(+)</text>
        <dbReference type="Rhea" id="RHEA:21164"/>
        <dbReference type="ChEBI" id="CHEBI:15377"/>
        <dbReference type="ChEBI" id="CHEBI:15378"/>
        <dbReference type="ChEBI" id="CHEBI:29067"/>
        <dbReference type="ChEBI" id="CHEBI:30879"/>
        <dbReference type="ChEBI" id="CHEBI:33308"/>
        <dbReference type="EC" id="3.1.1.1"/>
    </reaction>
</comment>
<comment type="similarity">
    <text evidence="1">Belongs to the FrsA family.</text>
</comment>
<accession>B5R4S2</accession>
<gene>
    <name evidence="1" type="primary">frsA</name>
    <name type="ordered locus">SEN0301</name>
</gene>
<evidence type="ECO:0000255" key="1">
    <source>
        <dbReference type="HAMAP-Rule" id="MF_01063"/>
    </source>
</evidence>
<sequence length="414" mass="47174">MTQANLSETLFKPRFKHTETSTLVRRFNRGSQPPMQSALDGKNVPHWYRMINRLMWIWRGIDPREILDVQARIVMSDAERTDDDLYDTVIGYRGGNWIYEWAKQAMDWQQKACQEQDAMRSGRYWLHASTLYNIAAYPHLKGDELAEQAQALANRAYEEAAQRLPGSLREMEFAVPGGSPVTAFLHMPKGDGPFPTVLMCGGLDAMQTDYYTLYERYFAPRGIAMLTLDMPSVGFSSKWKLTQDSSLLHQHVLKALPNVPWVDHTRVAAFGFRFGANVAVRLAYLEAPRLKAVACLGPVVHALLSDPQRQSTVPEMYLDVLASRLGMHDASDEALRVELNRYSLKVQGLLGRRCPTPMLSGFWKNDPFSPEEESRLITTSSSDGKLIEIPFNPVYRNFDRALQEITDWINHRLC</sequence>
<keyword id="KW-0378">Hydrolase</keyword>
<keyword id="KW-0719">Serine esterase</keyword>
<reference key="1">
    <citation type="journal article" date="2008" name="Genome Res.">
        <title>Comparative genome analysis of Salmonella enteritidis PT4 and Salmonella gallinarum 287/91 provides insights into evolutionary and host adaptation pathways.</title>
        <authorList>
            <person name="Thomson N.R."/>
            <person name="Clayton D.J."/>
            <person name="Windhorst D."/>
            <person name="Vernikos G."/>
            <person name="Davidson S."/>
            <person name="Churcher C."/>
            <person name="Quail M.A."/>
            <person name="Stevens M."/>
            <person name="Jones M.A."/>
            <person name="Watson M."/>
            <person name="Barron A."/>
            <person name="Layton A."/>
            <person name="Pickard D."/>
            <person name="Kingsley R.A."/>
            <person name="Bignell A."/>
            <person name="Clark L."/>
            <person name="Harris B."/>
            <person name="Ormond D."/>
            <person name="Abdellah Z."/>
            <person name="Brooks K."/>
            <person name="Cherevach I."/>
            <person name="Chillingworth T."/>
            <person name="Woodward J."/>
            <person name="Norberczak H."/>
            <person name="Lord A."/>
            <person name="Arrowsmith C."/>
            <person name="Jagels K."/>
            <person name="Moule S."/>
            <person name="Mungall K."/>
            <person name="Saunders M."/>
            <person name="Whitehead S."/>
            <person name="Chabalgoity J.A."/>
            <person name="Maskell D."/>
            <person name="Humphreys T."/>
            <person name="Roberts M."/>
            <person name="Barrow P.A."/>
            <person name="Dougan G."/>
            <person name="Parkhill J."/>
        </authorList>
    </citation>
    <scope>NUCLEOTIDE SEQUENCE [LARGE SCALE GENOMIC DNA]</scope>
    <source>
        <strain>P125109</strain>
    </source>
</reference>
<name>FRSA_SALEP</name>
<proteinExistence type="inferred from homology"/>
<feature type="chain" id="PRO_1000136522" description="Esterase FrsA">
    <location>
        <begin position="1"/>
        <end position="414"/>
    </location>
</feature>
<dbReference type="EC" id="3.1.1.1" evidence="1"/>
<dbReference type="EMBL" id="AM933172">
    <property type="protein sequence ID" value="CAR31888.1"/>
    <property type="molecule type" value="Genomic_DNA"/>
</dbReference>
<dbReference type="RefSeq" id="WP_000189582.1">
    <property type="nucleotide sequence ID" value="NC_011294.1"/>
</dbReference>
<dbReference type="SMR" id="B5R4S2"/>
<dbReference type="ESTHER" id="salty-yafa">
    <property type="family name" value="Duf_1100-R"/>
</dbReference>
<dbReference type="KEGG" id="set:SEN0301"/>
<dbReference type="HOGENOM" id="CLU_036819_0_0_6"/>
<dbReference type="Proteomes" id="UP000000613">
    <property type="component" value="Chromosome"/>
</dbReference>
<dbReference type="GO" id="GO:0106435">
    <property type="term" value="F:carboxylesterase activity"/>
    <property type="evidence" value="ECO:0007669"/>
    <property type="project" value="UniProtKB-EC"/>
</dbReference>
<dbReference type="FunFam" id="3.40.50.1820:FF:000022">
    <property type="entry name" value="Esterase FrsA"/>
    <property type="match status" value="1"/>
</dbReference>
<dbReference type="Gene3D" id="3.40.50.1820">
    <property type="entry name" value="alpha/beta hydrolase"/>
    <property type="match status" value="1"/>
</dbReference>
<dbReference type="HAMAP" id="MF_01063">
    <property type="entry name" value="FrsA"/>
    <property type="match status" value="1"/>
</dbReference>
<dbReference type="InterPro" id="IPR029058">
    <property type="entry name" value="AB_hydrolase_fold"/>
</dbReference>
<dbReference type="InterPro" id="IPR043423">
    <property type="entry name" value="FrsA"/>
</dbReference>
<dbReference type="InterPro" id="IPR010520">
    <property type="entry name" value="FrsA-like"/>
</dbReference>
<dbReference type="InterPro" id="IPR050261">
    <property type="entry name" value="FrsA_esterase"/>
</dbReference>
<dbReference type="NCBIfam" id="NF003460">
    <property type="entry name" value="PRK05077.1"/>
    <property type="match status" value="1"/>
</dbReference>
<dbReference type="PANTHER" id="PTHR22946">
    <property type="entry name" value="DIENELACTONE HYDROLASE DOMAIN-CONTAINING PROTEIN-RELATED"/>
    <property type="match status" value="1"/>
</dbReference>
<dbReference type="PANTHER" id="PTHR22946:SF4">
    <property type="entry name" value="ESTERASE FRSA"/>
    <property type="match status" value="1"/>
</dbReference>
<dbReference type="Pfam" id="PF06500">
    <property type="entry name" value="FrsA-like"/>
    <property type="match status" value="1"/>
</dbReference>
<dbReference type="SUPFAM" id="SSF53474">
    <property type="entry name" value="alpha/beta-Hydrolases"/>
    <property type="match status" value="1"/>
</dbReference>